<comment type="function">
    <text evidence="1">Catalyzes the phosphorylation of the hydroxyl group of 4-methyl-5-beta-hydroxyethylthiazole (THZ).</text>
</comment>
<comment type="catalytic activity">
    <reaction evidence="1">
        <text>5-(2-hydroxyethyl)-4-methylthiazole + ATP = 4-methyl-5-(2-phosphooxyethyl)-thiazole + ADP + H(+)</text>
        <dbReference type="Rhea" id="RHEA:24212"/>
        <dbReference type="ChEBI" id="CHEBI:15378"/>
        <dbReference type="ChEBI" id="CHEBI:17957"/>
        <dbReference type="ChEBI" id="CHEBI:30616"/>
        <dbReference type="ChEBI" id="CHEBI:58296"/>
        <dbReference type="ChEBI" id="CHEBI:456216"/>
        <dbReference type="EC" id="2.7.1.50"/>
    </reaction>
</comment>
<comment type="cofactor">
    <cofactor evidence="1">
        <name>Mg(2+)</name>
        <dbReference type="ChEBI" id="CHEBI:18420"/>
    </cofactor>
</comment>
<comment type="pathway">
    <text evidence="1">Cofactor biosynthesis; thiamine diphosphate biosynthesis; 4-methyl-5-(2-phosphoethyl)-thiazole from 5-(2-hydroxyethyl)-4-methylthiazole: step 1/1.</text>
</comment>
<comment type="similarity">
    <text evidence="1">Belongs to the Thz kinase family.</text>
</comment>
<comment type="sequence caution" evidence="2">
    <conflict type="erroneous initiation">
        <sequence resource="EMBL-CDS" id="CAG35228"/>
    </conflict>
</comment>
<feature type="chain" id="PRO_0000383853" description="Hydroxyethylthiazole kinase">
    <location>
        <begin position="1"/>
        <end position="273"/>
    </location>
</feature>
<feature type="binding site" evidence="1">
    <location>
        <position position="47"/>
    </location>
    <ligand>
        <name>substrate</name>
    </ligand>
</feature>
<feature type="binding site" evidence="1">
    <location>
        <position position="123"/>
    </location>
    <ligand>
        <name>ATP</name>
        <dbReference type="ChEBI" id="CHEBI:30616"/>
    </ligand>
</feature>
<feature type="binding site" evidence="1">
    <location>
        <position position="169"/>
    </location>
    <ligand>
        <name>ATP</name>
        <dbReference type="ChEBI" id="CHEBI:30616"/>
    </ligand>
</feature>
<feature type="binding site" evidence="1">
    <location>
        <position position="196"/>
    </location>
    <ligand>
        <name>substrate</name>
    </ligand>
</feature>
<accession>Q6AQZ6</accession>
<keyword id="KW-0067">ATP-binding</keyword>
<keyword id="KW-0418">Kinase</keyword>
<keyword id="KW-0460">Magnesium</keyword>
<keyword id="KW-0479">Metal-binding</keyword>
<keyword id="KW-0547">Nucleotide-binding</keyword>
<keyword id="KW-1185">Reference proteome</keyword>
<keyword id="KW-0784">Thiamine biosynthesis</keyword>
<keyword id="KW-0808">Transferase</keyword>
<name>THIM_DESPS</name>
<sequence>MSNISLTAAENLQQIRENKPLIHNITNFVVMNYTANVLLATGASPVMAHAQNEVEEMVAFAGSLVLNIGTLSESWVSSMLMASQRANTLKTPIILDPVGSGATAFRTASAKRIIAEAKVSVIRGNASEILSLGSEQSNTRGVDTSQSVSDAAQTASLLARELDTILAITGPTDLVTDGRRVFNVDNGHPLMPYVTGTGCSATAVVGAFAAVDRDYLRAATTALAFFGLAGEMAGKAATGPGSFMIHLLDALYNMSPEQLEKGCRIKESSATRS</sequence>
<dbReference type="EC" id="2.7.1.50" evidence="1"/>
<dbReference type="EMBL" id="CR522870">
    <property type="protein sequence ID" value="CAG35228.1"/>
    <property type="status" value="ALT_INIT"/>
    <property type="molecule type" value="Genomic_DNA"/>
</dbReference>
<dbReference type="RefSeq" id="WP_041277537.1">
    <property type="nucleotide sequence ID" value="NC_006138.1"/>
</dbReference>
<dbReference type="SMR" id="Q6AQZ6"/>
<dbReference type="STRING" id="177439.DP0499"/>
<dbReference type="KEGG" id="dps:DP0499"/>
<dbReference type="eggNOG" id="COG2145">
    <property type="taxonomic scope" value="Bacteria"/>
</dbReference>
<dbReference type="HOGENOM" id="CLU_019943_0_1_7"/>
<dbReference type="OrthoDB" id="8909021at2"/>
<dbReference type="UniPathway" id="UPA00060">
    <property type="reaction ID" value="UER00139"/>
</dbReference>
<dbReference type="Proteomes" id="UP000000602">
    <property type="component" value="Chromosome"/>
</dbReference>
<dbReference type="GO" id="GO:0005524">
    <property type="term" value="F:ATP binding"/>
    <property type="evidence" value="ECO:0007669"/>
    <property type="project" value="UniProtKB-UniRule"/>
</dbReference>
<dbReference type="GO" id="GO:0004417">
    <property type="term" value="F:hydroxyethylthiazole kinase activity"/>
    <property type="evidence" value="ECO:0007669"/>
    <property type="project" value="UniProtKB-UniRule"/>
</dbReference>
<dbReference type="GO" id="GO:0000287">
    <property type="term" value="F:magnesium ion binding"/>
    <property type="evidence" value="ECO:0007669"/>
    <property type="project" value="UniProtKB-UniRule"/>
</dbReference>
<dbReference type="GO" id="GO:0009228">
    <property type="term" value="P:thiamine biosynthetic process"/>
    <property type="evidence" value="ECO:0007669"/>
    <property type="project" value="UniProtKB-KW"/>
</dbReference>
<dbReference type="GO" id="GO:0009229">
    <property type="term" value="P:thiamine diphosphate biosynthetic process"/>
    <property type="evidence" value="ECO:0007669"/>
    <property type="project" value="UniProtKB-UniRule"/>
</dbReference>
<dbReference type="CDD" id="cd01170">
    <property type="entry name" value="THZ_kinase"/>
    <property type="match status" value="1"/>
</dbReference>
<dbReference type="Gene3D" id="3.40.1190.20">
    <property type="match status" value="1"/>
</dbReference>
<dbReference type="HAMAP" id="MF_00228">
    <property type="entry name" value="Thz_kinase"/>
    <property type="match status" value="1"/>
</dbReference>
<dbReference type="InterPro" id="IPR000417">
    <property type="entry name" value="Hyethyz_kinase"/>
</dbReference>
<dbReference type="InterPro" id="IPR029056">
    <property type="entry name" value="Ribokinase-like"/>
</dbReference>
<dbReference type="NCBIfam" id="NF006830">
    <property type="entry name" value="PRK09355.1"/>
    <property type="match status" value="1"/>
</dbReference>
<dbReference type="NCBIfam" id="TIGR00694">
    <property type="entry name" value="thiM"/>
    <property type="match status" value="1"/>
</dbReference>
<dbReference type="Pfam" id="PF02110">
    <property type="entry name" value="HK"/>
    <property type="match status" value="1"/>
</dbReference>
<dbReference type="PIRSF" id="PIRSF000513">
    <property type="entry name" value="Thz_kinase"/>
    <property type="match status" value="1"/>
</dbReference>
<dbReference type="PRINTS" id="PR01099">
    <property type="entry name" value="HYETHTZKNASE"/>
</dbReference>
<dbReference type="SUPFAM" id="SSF53613">
    <property type="entry name" value="Ribokinase-like"/>
    <property type="match status" value="1"/>
</dbReference>
<proteinExistence type="inferred from homology"/>
<organism>
    <name type="scientific">Desulfotalea psychrophila (strain LSv54 / DSM 12343)</name>
    <dbReference type="NCBI Taxonomy" id="177439"/>
    <lineage>
        <taxon>Bacteria</taxon>
        <taxon>Pseudomonadati</taxon>
        <taxon>Thermodesulfobacteriota</taxon>
        <taxon>Desulfobulbia</taxon>
        <taxon>Desulfobulbales</taxon>
        <taxon>Desulfocapsaceae</taxon>
        <taxon>Desulfotalea</taxon>
    </lineage>
</organism>
<reference key="1">
    <citation type="journal article" date="2004" name="Environ. Microbiol.">
        <title>The genome of Desulfotalea psychrophila, a sulfate-reducing bacterium from permanently cold Arctic sediments.</title>
        <authorList>
            <person name="Rabus R."/>
            <person name="Ruepp A."/>
            <person name="Frickey T."/>
            <person name="Rattei T."/>
            <person name="Fartmann B."/>
            <person name="Stark M."/>
            <person name="Bauer M."/>
            <person name="Zibat A."/>
            <person name="Lombardot T."/>
            <person name="Becker I."/>
            <person name="Amann J."/>
            <person name="Gellner K."/>
            <person name="Teeling H."/>
            <person name="Leuschner W.D."/>
            <person name="Gloeckner F.-O."/>
            <person name="Lupas A.N."/>
            <person name="Amann R."/>
            <person name="Klenk H.-P."/>
        </authorList>
    </citation>
    <scope>NUCLEOTIDE SEQUENCE [LARGE SCALE GENOMIC DNA]</scope>
    <source>
        <strain>DSM 12343 / LSv54</strain>
    </source>
</reference>
<protein>
    <recommendedName>
        <fullName evidence="1">Hydroxyethylthiazole kinase</fullName>
        <ecNumber evidence="1">2.7.1.50</ecNumber>
    </recommendedName>
    <alternativeName>
        <fullName evidence="1">4-methyl-5-beta-hydroxyethylthiazole kinase</fullName>
        <shortName evidence="1">TH kinase</shortName>
        <shortName evidence="1">Thz kinase</shortName>
    </alternativeName>
</protein>
<gene>
    <name evidence="1" type="primary">thiM</name>
    <name type="ordered locus">DP0499</name>
</gene>
<evidence type="ECO:0000255" key="1">
    <source>
        <dbReference type="HAMAP-Rule" id="MF_00228"/>
    </source>
</evidence>
<evidence type="ECO:0000305" key="2"/>